<organism>
    <name type="scientific">Paracoccidioides brasiliensis (strain Pb18)</name>
    <dbReference type="NCBI Taxonomy" id="502780"/>
    <lineage>
        <taxon>Eukaryota</taxon>
        <taxon>Fungi</taxon>
        <taxon>Dikarya</taxon>
        <taxon>Ascomycota</taxon>
        <taxon>Pezizomycotina</taxon>
        <taxon>Eurotiomycetes</taxon>
        <taxon>Eurotiomycetidae</taxon>
        <taxon>Onygenales</taxon>
        <taxon>Ajellomycetaceae</taxon>
        <taxon>Paracoccidioides</taxon>
    </lineage>
</organism>
<feature type="chain" id="PRO_0000399644" description="Respiratory supercomplex factor 1, mitochondrial">
    <location>
        <begin position="1"/>
        <end position="144"/>
    </location>
</feature>
<feature type="transmembrane region" description="Helical" evidence="3">
    <location>
        <begin position="33"/>
        <end position="50"/>
    </location>
</feature>
<feature type="transmembrane region" description="Helical" evidence="3">
    <location>
        <begin position="69"/>
        <end position="88"/>
    </location>
</feature>
<feature type="domain" description="HIG1" evidence="3">
    <location>
        <begin position="6"/>
        <end position="97"/>
    </location>
</feature>
<feature type="coiled-coil region" evidence="2">
    <location>
        <begin position="86"/>
        <end position="142"/>
    </location>
</feature>
<comment type="function">
    <text evidence="1">Cytochrome c oxidase subunit which plays a role in assembly of respiratory supercomplexes.</text>
</comment>
<comment type="subunit">
    <text evidence="1">Associates with the respiratory chain complex III/complex IV supercomplex.</text>
</comment>
<comment type="subcellular location">
    <subcellularLocation>
        <location evidence="3">Mitochondrion membrane</location>
        <topology evidence="3">Multi-pass membrane protein</topology>
    </subcellularLocation>
</comment>
<comment type="similarity">
    <text evidence="4">Belongs to the RCF1 family.</text>
</comment>
<sequence>MSNTSLPSSFDSHPEFFQETKWQKFTRRIKEEPLIPIGYAATSYALWRAYKSMKAGDSIELNRMFRARIYGHAFTLFAIVAGGIYYGNERRQRKEFEKALQEKSNQQKRDSWLRELEIRDKEDKDWRQRHAAIEAAAKEAEKKG</sequence>
<evidence type="ECO:0000250" key="1"/>
<evidence type="ECO:0000255" key="2"/>
<evidence type="ECO:0000255" key="3">
    <source>
        <dbReference type="PROSITE-ProRule" id="PRU00836"/>
    </source>
</evidence>
<evidence type="ECO:0000305" key="4"/>
<reference key="1">
    <citation type="journal article" date="2011" name="PLoS Genet.">
        <title>Comparative genomic analysis of human fungal pathogens causing paracoccidioidomycosis.</title>
        <authorList>
            <person name="Desjardins C.A."/>
            <person name="Champion M.D."/>
            <person name="Holder J.W."/>
            <person name="Muszewska A."/>
            <person name="Goldberg J."/>
            <person name="Bailao A.M."/>
            <person name="Brigido M.M."/>
            <person name="Ferreira M.E."/>
            <person name="Garcia A.M."/>
            <person name="Grynberg M."/>
            <person name="Gujja S."/>
            <person name="Heiman D.I."/>
            <person name="Henn M.R."/>
            <person name="Kodira C.D."/>
            <person name="Leon-Narvaez H."/>
            <person name="Longo L.V.G."/>
            <person name="Ma L.-J."/>
            <person name="Malavazi I."/>
            <person name="Matsuo A.L."/>
            <person name="Morais F.V."/>
            <person name="Pereira M."/>
            <person name="Rodriguez-Brito S."/>
            <person name="Sakthikumar S."/>
            <person name="Salem-Izacc S.M."/>
            <person name="Sykes S.M."/>
            <person name="Teixeira M.M."/>
            <person name="Vallejo M.C."/>
            <person name="Walter M.E."/>
            <person name="Yandava C."/>
            <person name="Young S."/>
            <person name="Zeng Q."/>
            <person name="Zucker J."/>
            <person name="Felipe M.S."/>
            <person name="Goldman G.H."/>
            <person name="Haas B.J."/>
            <person name="McEwen J.G."/>
            <person name="Nino-Vega G."/>
            <person name="Puccia R."/>
            <person name="San-Blas G."/>
            <person name="Soares C.M."/>
            <person name="Birren B.W."/>
            <person name="Cuomo C.A."/>
        </authorList>
    </citation>
    <scope>NUCLEOTIDE SEQUENCE [LARGE SCALE GENOMIC DNA]</scope>
    <source>
        <strain>Pb18</strain>
    </source>
</reference>
<dbReference type="EMBL" id="KN275959">
    <property type="protein sequence ID" value="EEH46951.1"/>
    <property type="molecule type" value="Genomic_DNA"/>
</dbReference>
<dbReference type="RefSeq" id="XP_010758702.1">
    <property type="nucleotide sequence ID" value="XM_010760400.1"/>
</dbReference>
<dbReference type="SMR" id="C1G794"/>
<dbReference type="FunCoup" id="C1G794">
    <property type="interactions" value="65"/>
</dbReference>
<dbReference type="STRING" id="502780.C1G794"/>
<dbReference type="GeneID" id="22582421"/>
<dbReference type="KEGG" id="pbn:PADG_03049"/>
<dbReference type="VEuPathDB" id="FungiDB:PADG_03049"/>
<dbReference type="eggNOG" id="KOG4431">
    <property type="taxonomic scope" value="Eukaryota"/>
</dbReference>
<dbReference type="HOGENOM" id="CLU_087356_0_2_1"/>
<dbReference type="InParanoid" id="C1G794"/>
<dbReference type="OMA" id="YYRTERT"/>
<dbReference type="OrthoDB" id="5793at33183"/>
<dbReference type="Proteomes" id="UP000001628">
    <property type="component" value="Unassembled WGS sequence"/>
</dbReference>
<dbReference type="GO" id="GO:0031966">
    <property type="term" value="C:mitochondrial membrane"/>
    <property type="evidence" value="ECO:0007669"/>
    <property type="project" value="UniProtKB-SubCell"/>
</dbReference>
<dbReference type="GO" id="GO:0097250">
    <property type="term" value="P:mitochondrial respirasome assembly"/>
    <property type="evidence" value="ECO:0007669"/>
    <property type="project" value="TreeGrafter"/>
</dbReference>
<dbReference type="InterPro" id="IPR007667">
    <property type="entry name" value="Hypoxia_induced_domain"/>
</dbReference>
<dbReference type="InterPro" id="IPR050355">
    <property type="entry name" value="RCF1"/>
</dbReference>
<dbReference type="PANTHER" id="PTHR12297:SF3">
    <property type="entry name" value="HIG1 DOMAIN FAMILY MEMBER 1A"/>
    <property type="match status" value="1"/>
</dbReference>
<dbReference type="PANTHER" id="PTHR12297">
    <property type="entry name" value="HYPOXIA-INDUCBILE GENE 1 HIG1 -RELATED"/>
    <property type="match status" value="1"/>
</dbReference>
<dbReference type="Pfam" id="PF04588">
    <property type="entry name" value="HIG_1_N"/>
    <property type="match status" value="1"/>
</dbReference>
<dbReference type="PROSITE" id="PS51503">
    <property type="entry name" value="HIG1"/>
    <property type="match status" value="1"/>
</dbReference>
<keyword id="KW-0175">Coiled coil</keyword>
<keyword id="KW-0472">Membrane</keyword>
<keyword id="KW-0496">Mitochondrion</keyword>
<keyword id="KW-1185">Reference proteome</keyword>
<keyword id="KW-0812">Transmembrane</keyword>
<keyword id="KW-1133">Transmembrane helix</keyword>
<gene>
    <name type="primary">RCF1</name>
    <name type="synonym">AIM31</name>
    <name type="ORF">PADG_03049</name>
</gene>
<protein>
    <recommendedName>
        <fullName>Respiratory supercomplex factor 1, mitochondrial</fullName>
    </recommendedName>
</protein>
<proteinExistence type="inferred from homology"/>
<name>RCF1_PARBD</name>
<accession>C1G794</accession>